<keyword id="KW-0067">ATP-binding</keyword>
<keyword id="KW-0238">DNA-binding</keyword>
<keyword id="KW-0479">Metal-binding</keyword>
<keyword id="KW-0547">Nucleotide-binding</keyword>
<keyword id="KW-1185">Reference proteome</keyword>
<keyword id="KW-0678">Repressor</keyword>
<keyword id="KW-0804">Transcription</keyword>
<keyword id="KW-0805">Transcription regulation</keyword>
<keyword id="KW-0862">Zinc</keyword>
<keyword id="KW-0863">Zinc-finger</keyword>
<reference key="1">
    <citation type="journal article" date="2005" name="Proc. Natl. Acad. Sci. U.S.A.">
        <title>The complete genome sequence of Mycobacterium avium subspecies paratuberculosis.</title>
        <authorList>
            <person name="Li L."/>
            <person name="Bannantine J.P."/>
            <person name="Zhang Q."/>
            <person name="Amonsin A."/>
            <person name="May B.J."/>
            <person name="Alt D."/>
            <person name="Banerji N."/>
            <person name="Kanjilal S."/>
            <person name="Kapur V."/>
        </authorList>
    </citation>
    <scope>NUCLEOTIDE SEQUENCE [LARGE SCALE GENOMIC DNA]</scope>
    <source>
        <strain>ATCC BAA-968 / K-10</strain>
    </source>
</reference>
<comment type="function">
    <text evidence="1">Negatively regulates transcription of bacterial ribonucleotide reductase nrd genes and operons by binding to NrdR-boxes.</text>
</comment>
<comment type="cofactor">
    <cofactor evidence="1">
        <name>Zn(2+)</name>
        <dbReference type="ChEBI" id="CHEBI:29105"/>
    </cofactor>
    <text evidence="1">Binds 1 zinc ion.</text>
</comment>
<comment type="similarity">
    <text evidence="1">Belongs to the NrdR family.</text>
</comment>
<protein>
    <recommendedName>
        <fullName evidence="1">Transcriptional repressor NrdR</fullName>
    </recommendedName>
</protein>
<name>NRDR_MYCPA</name>
<organism>
    <name type="scientific">Mycolicibacterium paratuberculosis (strain ATCC BAA-968 / K-10)</name>
    <name type="common">Mycobacterium paratuberculosis</name>
    <dbReference type="NCBI Taxonomy" id="262316"/>
    <lineage>
        <taxon>Bacteria</taxon>
        <taxon>Bacillati</taxon>
        <taxon>Actinomycetota</taxon>
        <taxon>Actinomycetes</taxon>
        <taxon>Mycobacteriales</taxon>
        <taxon>Mycobacteriaceae</taxon>
        <taxon>Mycobacterium</taxon>
        <taxon>Mycobacterium avium complex (MAC)</taxon>
    </lineage>
</organism>
<feature type="chain" id="PRO_0000182320" description="Transcriptional repressor NrdR">
    <location>
        <begin position="1"/>
        <end position="154"/>
    </location>
</feature>
<feature type="domain" description="ATP-cone" evidence="1">
    <location>
        <begin position="46"/>
        <end position="136"/>
    </location>
</feature>
<feature type="zinc finger region" evidence="1">
    <location>
        <begin position="3"/>
        <end position="34"/>
    </location>
</feature>
<dbReference type="EMBL" id="AE016958">
    <property type="protein sequence ID" value="AAS05151.1"/>
    <property type="molecule type" value="Genomic_DNA"/>
</dbReference>
<dbReference type="RefSeq" id="WP_003875225.1">
    <property type="nucleotide sequence ID" value="NZ_CP106873.1"/>
</dbReference>
<dbReference type="SMR" id="Q73W26"/>
<dbReference type="STRING" id="262316.MAP_2834c"/>
<dbReference type="GeneID" id="75271001"/>
<dbReference type="KEGG" id="mpa:MAP_2834c"/>
<dbReference type="eggNOG" id="COG1327">
    <property type="taxonomic scope" value="Bacteria"/>
</dbReference>
<dbReference type="HOGENOM" id="CLU_108412_1_0_11"/>
<dbReference type="Proteomes" id="UP000000580">
    <property type="component" value="Chromosome"/>
</dbReference>
<dbReference type="GO" id="GO:0005524">
    <property type="term" value="F:ATP binding"/>
    <property type="evidence" value="ECO:0007669"/>
    <property type="project" value="UniProtKB-KW"/>
</dbReference>
<dbReference type="GO" id="GO:0003677">
    <property type="term" value="F:DNA binding"/>
    <property type="evidence" value="ECO:0007669"/>
    <property type="project" value="UniProtKB-KW"/>
</dbReference>
<dbReference type="GO" id="GO:0008270">
    <property type="term" value="F:zinc ion binding"/>
    <property type="evidence" value="ECO:0007669"/>
    <property type="project" value="UniProtKB-UniRule"/>
</dbReference>
<dbReference type="GO" id="GO:0045892">
    <property type="term" value="P:negative regulation of DNA-templated transcription"/>
    <property type="evidence" value="ECO:0007669"/>
    <property type="project" value="UniProtKB-UniRule"/>
</dbReference>
<dbReference type="HAMAP" id="MF_00440">
    <property type="entry name" value="NrdR"/>
    <property type="match status" value="1"/>
</dbReference>
<dbReference type="InterPro" id="IPR005144">
    <property type="entry name" value="ATP-cone_dom"/>
</dbReference>
<dbReference type="InterPro" id="IPR055173">
    <property type="entry name" value="NrdR-like_N"/>
</dbReference>
<dbReference type="InterPro" id="IPR003796">
    <property type="entry name" value="RNR_NrdR-like"/>
</dbReference>
<dbReference type="NCBIfam" id="TIGR00244">
    <property type="entry name" value="transcriptional regulator NrdR"/>
    <property type="match status" value="1"/>
</dbReference>
<dbReference type="PANTHER" id="PTHR30455">
    <property type="entry name" value="TRANSCRIPTIONAL REPRESSOR NRDR"/>
    <property type="match status" value="1"/>
</dbReference>
<dbReference type="PANTHER" id="PTHR30455:SF2">
    <property type="entry name" value="TRANSCRIPTIONAL REPRESSOR NRDR"/>
    <property type="match status" value="1"/>
</dbReference>
<dbReference type="Pfam" id="PF03477">
    <property type="entry name" value="ATP-cone"/>
    <property type="match status" value="1"/>
</dbReference>
<dbReference type="Pfam" id="PF22811">
    <property type="entry name" value="Zn_ribbon_NrdR"/>
    <property type="match status" value="1"/>
</dbReference>
<dbReference type="PROSITE" id="PS51161">
    <property type="entry name" value="ATP_CONE"/>
    <property type="match status" value="1"/>
</dbReference>
<evidence type="ECO:0000255" key="1">
    <source>
        <dbReference type="HAMAP-Rule" id="MF_00440"/>
    </source>
</evidence>
<gene>
    <name evidence="1" type="primary">nrdR</name>
    <name type="ordered locus">MAP_2834c</name>
</gene>
<proteinExistence type="inferred from homology"/>
<sequence>MHCPFCRHPDSRVIDSRETDEGQAIRRRRSCPECGRRFTTVETAVLAVVKRSGVTEPFSREKVISGVRRACQGRQVDDDALNLLAQQVEDTVRAAGSPEVPSHEVGLAILGPLRDLDEVAYLRFASVYRSFESADDFEREIQALREHRGVATPG</sequence>
<accession>Q73W26</accession>